<comment type="function">
    <text evidence="1">Catalyzes the oxidation of NADH.</text>
</comment>
<comment type="catalytic activity">
    <reaction>
        <text>a quinone + NADH + H(+) = a quinol + NAD(+)</text>
        <dbReference type="Rhea" id="RHEA:46160"/>
        <dbReference type="ChEBI" id="CHEBI:15378"/>
        <dbReference type="ChEBI" id="CHEBI:24646"/>
        <dbReference type="ChEBI" id="CHEBI:57540"/>
        <dbReference type="ChEBI" id="CHEBI:57945"/>
        <dbReference type="ChEBI" id="CHEBI:132124"/>
        <dbReference type="EC" id="1.6.5.9"/>
    </reaction>
</comment>
<comment type="catalytic activity">
    <reaction>
        <text>a ubiquinone + NADH + H(+) = a ubiquinol + NAD(+)</text>
        <dbReference type="Rhea" id="RHEA:23152"/>
        <dbReference type="Rhea" id="RHEA-COMP:9565"/>
        <dbReference type="Rhea" id="RHEA-COMP:9566"/>
        <dbReference type="ChEBI" id="CHEBI:15378"/>
        <dbReference type="ChEBI" id="CHEBI:16389"/>
        <dbReference type="ChEBI" id="CHEBI:17976"/>
        <dbReference type="ChEBI" id="CHEBI:57540"/>
        <dbReference type="ChEBI" id="CHEBI:57945"/>
    </reaction>
</comment>
<comment type="subcellular location">
    <subcellularLocation>
        <location evidence="3">Mitochondrion</location>
    </subcellularLocation>
</comment>
<comment type="similarity">
    <text evidence="4">Belongs to the NADH dehydrogenase family.</text>
</comment>
<protein>
    <recommendedName>
        <fullName>Probable NADH-ubiquinone oxidoreductase C947.15c, mitochondrial</fullName>
        <ecNumber>1.6.5.9</ecNumber>
    </recommendedName>
</protein>
<proteinExistence type="inferred from homology"/>
<sequence length="551" mass="60781">MSVSKARLQSVVRLSRTVPYSKTMVRSFHVSCAVKNSGNVPTPRNKSFFSRALEMAEVTSSLSMLGAVALFQSLRRLNNSSPKGKSGVPKKNIVVLGSGWGAVAAIKNLDPSLYNITLVSPRDHFLFTPMLPSCTVGTLRLPSITEPIVALFKGKIDPSNIHQAECTAIDTSAKKVTIRGTTEANEGKEAVIPYDTLVFAIGAGNQTFGIQGVRDHGCFLKEAGDAKKVFNRIFEILEQVRFNKDLSPEERARLLHITVVGGGPTGMEFAAEMQDFIDNDVKDMFPELQKDIHVTLIEAAPGVLPMFTKSLITYTENLFKNLNIKIMTKTVVKDVNEKNLIVQKTNPDGSKAMQEIPYGMLVWAAGITARPLTRTLMSSIPEQSGARKGLIVDEFFRVKGVPEMYAVGDCAFSGLPATAQVANQQGAWLAKNLNVEGKKFALHERIQALEKQLGEKEAPSQVAGLKQQVEQLKLEPFKYHHQGALAYVGDEKAIADLKLPFMKKMLPLQGIVGHTFWRLAYLNELISARSQFMVLIDWLKTRLFGRYDAKV</sequence>
<accession>O43090</accession>
<gene>
    <name type="ORF">SPBC947.15c</name>
</gene>
<evidence type="ECO:0000250" key="1"/>
<evidence type="ECO:0000255" key="2"/>
<evidence type="ECO:0000269" key="3">
    <source>
    </source>
</evidence>
<evidence type="ECO:0000305" key="4"/>
<dbReference type="EC" id="1.6.5.9"/>
<dbReference type="EMBL" id="CU329671">
    <property type="protein sequence ID" value="CAA17043.1"/>
    <property type="molecule type" value="Genomic_DNA"/>
</dbReference>
<dbReference type="PIR" id="T40767">
    <property type="entry name" value="T40767"/>
</dbReference>
<dbReference type="SMR" id="O43090"/>
<dbReference type="BioGRID" id="276744">
    <property type="interactions" value="15"/>
</dbReference>
<dbReference type="FunCoup" id="O43090">
    <property type="interactions" value="147"/>
</dbReference>
<dbReference type="STRING" id="284812.O43090"/>
<dbReference type="iPTMnet" id="O43090"/>
<dbReference type="PaxDb" id="4896-SPBC947.15c.1"/>
<dbReference type="EnsemblFungi" id="SPBC947.15c.1">
    <property type="protein sequence ID" value="SPBC947.15c.1:pep"/>
    <property type="gene ID" value="SPBC947.15c"/>
</dbReference>
<dbReference type="KEGG" id="spo:2540211"/>
<dbReference type="PomBase" id="SPBC947.15c"/>
<dbReference type="VEuPathDB" id="FungiDB:SPBC947.15c"/>
<dbReference type="eggNOG" id="KOG2495">
    <property type="taxonomic scope" value="Eukaryota"/>
</dbReference>
<dbReference type="HOGENOM" id="CLU_021377_1_0_1"/>
<dbReference type="InParanoid" id="O43090"/>
<dbReference type="OMA" id="DLVWGDW"/>
<dbReference type="PhylomeDB" id="O43090"/>
<dbReference type="PRO" id="PR:O43090"/>
<dbReference type="Proteomes" id="UP000002485">
    <property type="component" value="Chromosome II"/>
</dbReference>
<dbReference type="GO" id="GO:0005759">
    <property type="term" value="C:mitochondrial matrix"/>
    <property type="evidence" value="ECO:0000266"/>
    <property type="project" value="PomBase"/>
</dbReference>
<dbReference type="GO" id="GO:0005739">
    <property type="term" value="C:mitochondrion"/>
    <property type="evidence" value="ECO:0007005"/>
    <property type="project" value="PomBase"/>
</dbReference>
<dbReference type="GO" id="GO:0008137">
    <property type="term" value="F:NADH dehydrogenase (ubiquinone) activity"/>
    <property type="evidence" value="ECO:0000266"/>
    <property type="project" value="PomBase"/>
</dbReference>
<dbReference type="GO" id="GO:0050136">
    <property type="term" value="F:NADH:ubiquinone reductase (non-electrogenic) activity"/>
    <property type="evidence" value="ECO:0007669"/>
    <property type="project" value="UniProtKB-EC"/>
</dbReference>
<dbReference type="GO" id="GO:0016491">
    <property type="term" value="F:oxidoreductase activity"/>
    <property type="evidence" value="ECO:0000318"/>
    <property type="project" value="GO_Central"/>
</dbReference>
<dbReference type="GO" id="GO:0006120">
    <property type="term" value="P:mitochondrial electron transport, NADH to ubiquinone"/>
    <property type="evidence" value="ECO:0000266"/>
    <property type="project" value="PomBase"/>
</dbReference>
<dbReference type="Gene3D" id="3.50.50.100">
    <property type="match status" value="1"/>
</dbReference>
<dbReference type="InterPro" id="IPR036188">
    <property type="entry name" value="FAD/NAD-bd_sf"/>
</dbReference>
<dbReference type="InterPro" id="IPR023753">
    <property type="entry name" value="FAD/NAD-binding_dom"/>
</dbReference>
<dbReference type="InterPro" id="IPR045024">
    <property type="entry name" value="NDH-2"/>
</dbReference>
<dbReference type="InterPro" id="IPR054585">
    <property type="entry name" value="NDH2-like_C"/>
</dbReference>
<dbReference type="PANTHER" id="PTHR43706">
    <property type="entry name" value="NADH DEHYDROGENASE"/>
    <property type="match status" value="1"/>
</dbReference>
<dbReference type="PANTHER" id="PTHR43706:SF46">
    <property type="entry name" value="NADH-UBIQUINONE OXIDOREDUCTASE C947.15C, MITOCHONDRIAL-RELATED"/>
    <property type="match status" value="1"/>
</dbReference>
<dbReference type="Pfam" id="PF22366">
    <property type="entry name" value="NDH2_C"/>
    <property type="match status" value="1"/>
</dbReference>
<dbReference type="Pfam" id="PF07992">
    <property type="entry name" value="Pyr_redox_2"/>
    <property type="match status" value="1"/>
</dbReference>
<dbReference type="PRINTS" id="PR00368">
    <property type="entry name" value="FADPNR"/>
</dbReference>
<dbReference type="SUPFAM" id="SSF51905">
    <property type="entry name" value="FAD/NAD(P)-binding domain"/>
    <property type="match status" value="2"/>
</dbReference>
<keyword id="KW-0274">FAD</keyword>
<keyword id="KW-0285">Flavoprotein</keyword>
<keyword id="KW-0496">Mitochondrion</keyword>
<keyword id="KW-0520">NAD</keyword>
<keyword id="KW-0560">Oxidoreductase</keyword>
<keyword id="KW-1185">Reference proteome</keyword>
<keyword id="KW-0809">Transit peptide</keyword>
<keyword id="KW-0830">Ubiquinone</keyword>
<organism>
    <name type="scientific">Schizosaccharomyces pombe (strain 972 / ATCC 24843)</name>
    <name type="common">Fission yeast</name>
    <dbReference type="NCBI Taxonomy" id="284812"/>
    <lineage>
        <taxon>Eukaryota</taxon>
        <taxon>Fungi</taxon>
        <taxon>Dikarya</taxon>
        <taxon>Ascomycota</taxon>
        <taxon>Taphrinomycotina</taxon>
        <taxon>Schizosaccharomycetes</taxon>
        <taxon>Schizosaccharomycetales</taxon>
        <taxon>Schizosaccharomycetaceae</taxon>
        <taxon>Schizosaccharomyces</taxon>
    </lineage>
</organism>
<reference key="1">
    <citation type="journal article" date="2002" name="Nature">
        <title>The genome sequence of Schizosaccharomyces pombe.</title>
        <authorList>
            <person name="Wood V."/>
            <person name="Gwilliam R."/>
            <person name="Rajandream M.A."/>
            <person name="Lyne M.H."/>
            <person name="Lyne R."/>
            <person name="Stewart A."/>
            <person name="Sgouros J.G."/>
            <person name="Peat N."/>
            <person name="Hayles J."/>
            <person name="Baker S.G."/>
            <person name="Basham D."/>
            <person name="Bowman S."/>
            <person name="Brooks K."/>
            <person name="Brown D."/>
            <person name="Brown S."/>
            <person name="Chillingworth T."/>
            <person name="Churcher C.M."/>
            <person name="Collins M."/>
            <person name="Connor R."/>
            <person name="Cronin A."/>
            <person name="Davis P."/>
            <person name="Feltwell T."/>
            <person name="Fraser A."/>
            <person name="Gentles S."/>
            <person name="Goble A."/>
            <person name="Hamlin N."/>
            <person name="Harris D.E."/>
            <person name="Hidalgo J."/>
            <person name="Hodgson G."/>
            <person name="Holroyd S."/>
            <person name="Hornsby T."/>
            <person name="Howarth S."/>
            <person name="Huckle E.J."/>
            <person name="Hunt S."/>
            <person name="Jagels K."/>
            <person name="James K.D."/>
            <person name="Jones L."/>
            <person name="Jones M."/>
            <person name="Leather S."/>
            <person name="McDonald S."/>
            <person name="McLean J."/>
            <person name="Mooney P."/>
            <person name="Moule S."/>
            <person name="Mungall K.L."/>
            <person name="Murphy L.D."/>
            <person name="Niblett D."/>
            <person name="Odell C."/>
            <person name="Oliver K."/>
            <person name="O'Neil S."/>
            <person name="Pearson D."/>
            <person name="Quail M.A."/>
            <person name="Rabbinowitsch E."/>
            <person name="Rutherford K.M."/>
            <person name="Rutter S."/>
            <person name="Saunders D."/>
            <person name="Seeger K."/>
            <person name="Sharp S."/>
            <person name="Skelton J."/>
            <person name="Simmonds M.N."/>
            <person name="Squares R."/>
            <person name="Squares S."/>
            <person name="Stevens K."/>
            <person name="Taylor K."/>
            <person name="Taylor R.G."/>
            <person name="Tivey A."/>
            <person name="Walsh S.V."/>
            <person name="Warren T."/>
            <person name="Whitehead S."/>
            <person name="Woodward J.R."/>
            <person name="Volckaert G."/>
            <person name="Aert R."/>
            <person name="Robben J."/>
            <person name="Grymonprez B."/>
            <person name="Weltjens I."/>
            <person name="Vanstreels E."/>
            <person name="Rieger M."/>
            <person name="Schaefer M."/>
            <person name="Mueller-Auer S."/>
            <person name="Gabel C."/>
            <person name="Fuchs M."/>
            <person name="Duesterhoeft A."/>
            <person name="Fritzc C."/>
            <person name="Holzer E."/>
            <person name="Moestl D."/>
            <person name="Hilbert H."/>
            <person name="Borzym K."/>
            <person name="Langer I."/>
            <person name="Beck A."/>
            <person name="Lehrach H."/>
            <person name="Reinhardt R."/>
            <person name="Pohl T.M."/>
            <person name="Eger P."/>
            <person name="Zimmermann W."/>
            <person name="Wedler H."/>
            <person name="Wambutt R."/>
            <person name="Purnelle B."/>
            <person name="Goffeau A."/>
            <person name="Cadieu E."/>
            <person name="Dreano S."/>
            <person name="Gloux S."/>
            <person name="Lelaure V."/>
            <person name="Mottier S."/>
            <person name="Galibert F."/>
            <person name="Aves S.J."/>
            <person name="Xiang Z."/>
            <person name="Hunt C."/>
            <person name="Moore K."/>
            <person name="Hurst S.M."/>
            <person name="Lucas M."/>
            <person name="Rochet M."/>
            <person name="Gaillardin C."/>
            <person name="Tallada V.A."/>
            <person name="Garzon A."/>
            <person name="Thode G."/>
            <person name="Daga R.R."/>
            <person name="Cruzado L."/>
            <person name="Jimenez J."/>
            <person name="Sanchez M."/>
            <person name="del Rey F."/>
            <person name="Benito J."/>
            <person name="Dominguez A."/>
            <person name="Revuelta J.L."/>
            <person name="Moreno S."/>
            <person name="Armstrong J."/>
            <person name="Forsburg S.L."/>
            <person name="Cerutti L."/>
            <person name="Lowe T."/>
            <person name="McCombie W.R."/>
            <person name="Paulsen I."/>
            <person name="Potashkin J."/>
            <person name="Shpakovski G.V."/>
            <person name="Ussery D."/>
            <person name="Barrell B.G."/>
            <person name="Nurse P."/>
        </authorList>
    </citation>
    <scope>NUCLEOTIDE SEQUENCE [LARGE SCALE GENOMIC DNA]</scope>
    <source>
        <strain>972 / ATCC 24843</strain>
    </source>
</reference>
<reference key="2">
    <citation type="journal article" date="2006" name="Nat. Biotechnol.">
        <title>ORFeome cloning and global analysis of protein localization in the fission yeast Schizosaccharomyces pombe.</title>
        <authorList>
            <person name="Matsuyama A."/>
            <person name="Arai R."/>
            <person name="Yashiroda Y."/>
            <person name="Shirai A."/>
            <person name="Kamata A."/>
            <person name="Sekido S."/>
            <person name="Kobayashi Y."/>
            <person name="Hashimoto A."/>
            <person name="Hamamoto M."/>
            <person name="Hiraoka Y."/>
            <person name="Horinouchi S."/>
            <person name="Yoshida M."/>
        </authorList>
    </citation>
    <scope>SUBCELLULAR LOCATION [LARGE SCALE ANALYSIS]</scope>
</reference>
<feature type="transit peptide" description="Mitochondrion" evidence="2">
    <location>
        <begin position="1"/>
        <end position="35"/>
    </location>
</feature>
<feature type="chain" id="PRO_0000337258" description="Probable NADH-ubiquinone oxidoreductase C947.15c, mitochondrial">
    <location>
        <begin position="36"/>
        <end position="551"/>
    </location>
</feature>
<feature type="binding site" evidence="1">
    <location>
        <begin position="92"/>
        <end position="122"/>
    </location>
    <ligand>
        <name>FAD</name>
        <dbReference type="ChEBI" id="CHEBI:57692"/>
    </ligand>
</feature>
<feature type="binding site" evidence="1">
    <location>
        <begin position="255"/>
        <end position="291"/>
    </location>
    <ligand>
        <name>NAD(+)</name>
        <dbReference type="ChEBI" id="CHEBI:57540"/>
    </ligand>
</feature>
<name>NDH2_SCHPO</name>